<reference key="1">
    <citation type="journal article" date="1994" name="Proc. Natl. Acad. Sci. U.S.A.">
        <title>Evolutionary relationships of lactate dehydrogenases (LDHs) from mammals, birds, an amphibian, fish, barley, and bacteria: LDH cDNA sequences from Xenopus, pig, and rat.</title>
        <authorList>
            <person name="Tsuji S."/>
            <person name="Qureshi M.A."/>
            <person name="Hou E.W."/>
            <person name="Fitch W.M."/>
            <person name="Li S.S.-L."/>
        </authorList>
    </citation>
    <scope>NUCLEOTIDE SEQUENCE [MRNA]</scope>
    <source>
        <tissue>Muscle</tissue>
    </source>
</reference>
<reference key="2">
    <citation type="journal article" date="1977" name="Hoppe-Seyler's Z. Physiol. Chem.">
        <title>The primary structure of porcine lactate dehydrogenase: isoenzymes M4 and H4.</title>
        <authorList>
            <person name="Kiltz H.-H."/>
            <person name="Keil W."/>
            <person name="Griesbach M."/>
            <person name="Petry K."/>
            <person name="Meyer H."/>
        </authorList>
    </citation>
    <scope>PROTEIN SEQUENCE OF 2-332</scope>
    <scope>ACETYLATION AT ALA-2</scope>
</reference>
<reference key="3">
    <citation type="journal article" date="1991" name="Philos. Trans. R. Soc. Lond., B, Biol. Sci.">
        <title>Design and synthesis of new enzymes based on the lactate dehydrogenase framework.</title>
        <authorList>
            <person name="Dunn C.R."/>
            <person name="Wilks H.M."/>
            <person name="Halsall D.J."/>
            <person name="Atkinson T."/>
            <person name="Clarke A.R."/>
            <person name="Muirhead H."/>
            <person name="Holbrook J.J."/>
        </authorList>
    </citation>
    <scope>X-RAY CRYSTALLOGRAPHY (2.2 ANGSTROMS) IN COMPLEX WITH NAD AND SUBSTRATE ANALOG</scope>
</reference>
<protein>
    <recommendedName>
        <fullName>L-lactate dehydrogenase A chain</fullName>
        <shortName>LDH-A</shortName>
        <ecNumber evidence="1">1.1.1.27</ecNumber>
    </recommendedName>
    <alternativeName>
        <fullName>LDH muscle subunit</fullName>
        <shortName>LDH-M</shortName>
    </alternativeName>
</protein>
<keyword id="KW-0002">3D-structure</keyword>
<keyword id="KW-0007">Acetylation</keyword>
<keyword id="KW-0963">Cytoplasm</keyword>
<keyword id="KW-0903">Direct protein sequencing</keyword>
<keyword id="KW-1017">Isopeptide bond</keyword>
<keyword id="KW-0520">NAD</keyword>
<keyword id="KW-0560">Oxidoreductase</keyword>
<keyword id="KW-0597">Phosphoprotein</keyword>
<keyword id="KW-1185">Reference proteome</keyword>
<keyword id="KW-0832">Ubl conjugation</keyword>
<organism>
    <name type="scientific">Sus scrofa</name>
    <name type="common">Pig</name>
    <dbReference type="NCBI Taxonomy" id="9823"/>
    <lineage>
        <taxon>Eukaryota</taxon>
        <taxon>Metazoa</taxon>
        <taxon>Chordata</taxon>
        <taxon>Craniata</taxon>
        <taxon>Vertebrata</taxon>
        <taxon>Euteleostomi</taxon>
        <taxon>Mammalia</taxon>
        <taxon>Eutheria</taxon>
        <taxon>Laurasiatheria</taxon>
        <taxon>Artiodactyla</taxon>
        <taxon>Suina</taxon>
        <taxon>Suidae</taxon>
        <taxon>Sus</taxon>
    </lineage>
</organism>
<feature type="initiator methionine" description="Removed" evidence="5">
    <location>
        <position position="1"/>
    </location>
</feature>
<feature type="chain" id="PRO_0000168416" description="L-lactate dehydrogenase A chain">
    <location>
        <begin position="2"/>
        <end position="332"/>
    </location>
</feature>
<feature type="active site" description="Proton acceptor">
    <location>
        <position position="193"/>
    </location>
</feature>
<feature type="binding site" evidence="4">
    <location>
        <begin position="29"/>
        <end position="57"/>
    </location>
    <ligand>
        <name>NAD(+)</name>
        <dbReference type="ChEBI" id="CHEBI:57540"/>
    </ligand>
</feature>
<feature type="binding site" evidence="4">
    <location>
        <position position="99"/>
    </location>
    <ligand>
        <name>NAD(+)</name>
        <dbReference type="ChEBI" id="CHEBI:57540"/>
    </ligand>
</feature>
<feature type="binding site">
    <location>
        <position position="106"/>
    </location>
    <ligand>
        <name>substrate</name>
    </ligand>
</feature>
<feature type="binding site" evidence="4">
    <location>
        <position position="138"/>
    </location>
    <ligand>
        <name>NAD(+)</name>
        <dbReference type="ChEBI" id="CHEBI:57540"/>
    </ligand>
</feature>
<feature type="binding site">
    <location>
        <position position="138"/>
    </location>
    <ligand>
        <name>substrate</name>
    </ligand>
</feature>
<feature type="binding site">
    <location>
        <position position="169"/>
    </location>
    <ligand>
        <name>substrate</name>
    </ligand>
</feature>
<feature type="binding site">
    <location>
        <position position="248"/>
    </location>
    <ligand>
        <name>substrate</name>
    </ligand>
</feature>
<feature type="modified residue" description="N-acetylalanine" evidence="5">
    <location>
        <position position="2"/>
    </location>
</feature>
<feature type="modified residue" description="N6-acetyllysine; alternate" evidence="1">
    <location>
        <position position="5"/>
    </location>
</feature>
<feature type="modified residue" description="N6-succinyllysine; alternate" evidence="3">
    <location>
        <position position="5"/>
    </location>
</feature>
<feature type="modified residue" description="N6-acetyllysine" evidence="1">
    <location>
        <position position="14"/>
    </location>
</feature>
<feature type="modified residue" description="N6-acetyllysine; alternate" evidence="1">
    <location>
        <position position="57"/>
    </location>
</feature>
<feature type="modified residue" description="N6-acetyllysine" evidence="1">
    <location>
        <position position="81"/>
    </location>
</feature>
<feature type="modified residue" description="N6-acetyllysine; alternate" evidence="1">
    <location>
        <position position="118"/>
    </location>
</feature>
<feature type="modified residue" description="N6-succinyllysine; alternate" evidence="3">
    <location>
        <position position="118"/>
    </location>
</feature>
<feature type="modified residue" description="N6-acetyllysine" evidence="1">
    <location>
        <position position="126"/>
    </location>
</feature>
<feature type="modified residue" description="N6-acetyllysine" evidence="3">
    <location>
        <position position="224"/>
    </location>
</feature>
<feature type="modified residue" description="N6-acetyllysine" evidence="3">
    <location>
        <position position="232"/>
    </location>
</feature>
<feature type="modified residue" description="Phosphotyrosine" evidence="3">
    <location>
        <position position="239"/>
    </location>
</feature>
<feature type="modified residue" description="N6-acetyllysine" evidence="3">
    <location>
        <position position="243"/>
    </location>
</feature>
<feature type="modified residue" description="Phosphothreonine" evidence="2">
    <location>
        <position position="309"/>
    </location>
</feature>
<feature type="modified residue" description="N6-acetyllysine; alternate" evidence="1">
    <location>
        <position position="318"/>
    </location>
</feature>
<feature type="modified residue" description="N6-succinyllysine; alternate" evidence="3">
    <location>
        <position position="318"/>
    </location>
</feature>
<feature type="modified residue" description="Phosphothreonine" evidence="2">
    <location>
        <position position="322"/>
    </location>
</feature>
<feature type="cross-link" description="Glycyl lysine isopeptide (Lys-Gly) (interchain with G-Cter in SUMO2); alternate" evidence="1">
    <location>
        <position position="57"/>
    </location>
</feature>
<feature type="sequence conflict" description="In Ref. 2; AA sequence." evidence="6" ref="2">
    <original>Q</original>
    <variation>E</variation>
    <location>
        <position position="233"/>
    </location>
</feature>
<feature type="sequence conflict" description="In Ref. 2; AA sequence." evidence="6" ref="2">
    <original>D</original>
    <variation>N</variation>
    <location>
        <position position="286"/>
    </location>
</feature>
<feature type="helix" evidence="7">
    <location>
        <begin position="4"/>
        <end position="8"/>
    </location>
</feature>
<feature type="strand" evidence="7">
    <location>
        <begin position="20"/>
        <end position="26"/>
    </location>
</feature>
<feature type="helix" evidence="7">
    <location>
        <begin position="30"/>
        <end position="41"/>
    </location>
</feature>
<feature type="strand" evidence="7">
    <location>
        <begin position="46"/>
        <end position="51"/>
    </location>
</feature>
<feature type="helix" evidence="7">
    <location>
        <begin position="55"/>
        <end position="67"/>
    </location>
</feature>
<feature type="helix" evidence="7">
    <location>
        <begin position="68"/>
        <end position="71"/>
    </location>
</feature>
<feature type="strand" evidence="7">
    <location>
        <begin position="76"/>
        <end position="82"/>
    </location>
</feature>
<feature type="helix" evidence="7">
    <location>
        <begin position="83"/>
        <end position="86"/>
    </location>
</feature>
<feature type="strand" evidence="7">
    <location>
        <begin position="90"/>
        <end position="94"/>
    </location>
</feature>
<feature type="helix" evidence="7">
    <location>
        <begin position="106"/>
        <end position="109"/>
    </location>
</feature>
<feature type="helix" evidence="7">
    <location>
        <begin position="110"/>
        <end position="127"/>
    </location>
</feature>
<feature type="strand" evidence="7">
    <location>
        <begin position="132"/>
        <end position="135"/>
    </location>
</feature>
<feature type="strand" evidence="7">
    <location>
        <begin position="137"/>
        <end position="139"/>
    </location>
</feature>
<feature type="helix" evidence="7">
    <location>
        <begin position="140"/>
        <end position="151"/>
    </location>
</feature>
<feature type="strand" evidence="7">
    <location>
        <begin position="157"/>
        <end position="160"/>
    </location>
</feature>
<feature type="helix" evidence="7">
    <location>
        <begin position="164"/>
        <end position="178"/>
    </location>
</feature>
<feature type="helix" evidence="7">
    <location>
        <begin position="182"/>
        <end position="184"/>
    </location>
</feature>
<feature type="strand" evidence="7">
    <location>
        <begin position="189"/>
        <end position="191"/>
    </location>
</feature>
<feature type="helix" evidence="7">
    <location>
        <begin position="201"/>
        <end position="203"/>
    </location>
</feature>
<feature type="helix" evidence="7">
    <location>
        <begin position="211"/>
        <end position="214"/>
    </location>
</feature>
<feature type="strand" evidence="7">
    <location>
        <begin position="219"/>
        <end position="222"/>
    </location>
</feature>
<feature type="helix" evidence="7">
    <location>
        <begin position="228"/>
        <end position="245"/>
    </location>
</feature>
<feature type="helix" evidence="7">
    <location>
        <begin position="250"/>
        <end position="264"/>
    </location>
</feature>
<feature type="strand" evidence="7">
    <location>
        <begin position="269"/>
        <end position="276"/>
    </location>
</feature>
<feature type="turn" evidence="7">
    <location>
        <begin position="278"/>
        <end position="280"/>
    </location>
</feature>
<feature type="strand" evidence="7">
    <location>
        <begin position="288"/>
        <end position="296"/>
    </location>
</feature>
<feature type="strand" evidence="7">
    <location>
        <begin position="299"/>
        <end position="303"/>
    </location>
</feature>
<feature type="helix" evidence="7">
    <location>
        <begin position="310"/>
        <end position="330"/>
    </location>
</feature>
<gene>
    <name type="primary">LDHA</name>
</gene>
<name>LDHA_PIG</name>
<accession>P00339</accession>
<evidence type="ECO:0000250" key="1">
    <source>
        <dbReference type="UniProtKB" id="P00338"/>
    </source>
</evidence>
<evidence type="ECO:0000250" key="2">
    <source>
        <dbReference type="UniProtKB" id="P04642"/>
    </source>
</evidence>
<evidence type="ECO:0000250" key="3">
    <source>
        <dbReference type="UniProtKB" id="P06151"/>
    </source>
</evidence>
<evidence type="ECO:0000269" key="4">
    <source>
    </source>
</evidence>
<evidence type="ECO:0000269" key="5">
    <source>
    </source>
</evidence>
<evidence type="ECO:0000305" key="6"/>
<evidence type="ECO:0007829" key="7">
    <source>
        <dbReference type="PDB" id="9LDT"/>
    </source>
</evidence>
<sequence length="332" mass="36619">MATLKDQLIHNLLKEEHVPHNKITVVGVGAVGMACAISILMKELADEIALVDVMEDKLKGEMMDLQHGSLFLRTPKIVSGKDYNVTANSRLVVITAGARQQEGESRLNLVQRNVNIFKFIIPNIVKYSPNCKLLVVSNPVDILTYVAWKISGFPKNRVIGSGCNLDSARFRYLMGERLGVHPLSCHGWILGEHGDSSVPVWSGVNVAGVSLKNLHPELGTDADKEHWKAVHKQVVDSAYEVIKLKGYTSWAIGLSVADLAESIMKNLRRVHPISTMIKGLYGIKEDVFLSVPCILGQNGISDVVKVTLTPEEEAHLKKSADTLWGIQKELQF</sequence>
<comment type="function">
    <text evidence="1">Interconverts simultaneously and stereospecifically pyruvate and lactate with concomitant interconversion of NADH and NAD(+).</text>
</comment>
<comment type="catalytic activity">
    <reaction evidence="1">
        <text>(S)-lactate + NAD(+) = pyruvate + NADH + H(+)</text>
        <dbReference type="Rhea" id="RHEA:23444"/>
        <dbReference type="ChEBI" id="CHEBI:15361"/>
        <dbReference type="ChEBI" id="CHEBI:15378"/>
        <dbReference type="ChEBI" id="CHEBI:16651"/>
        <dbReference type="ChEBI" id="CHEBI:57540"/>
        <dbReference type="ChEBI" id="CHEBI:57945"/>
        <dbReference type="EC" id="1.1.1.27"/>
    </reaction>
    <physiologicalReaction direction="left-to-right" evidence="1">
        <dbReference type="Rhea" id="RHEA:23445"/>
    </physiologicalReaction>
    <physiologicalReaction direction="right-to-left" evidence="1">
        <dbReference type="Rhea" id="RHEA:23446"/>
    </physiologicalReaction>
</comment>
<comment type="pathway">
    <text evidence="1">Fermentation; pyruvate fermentation to lactate; (S)-lactate from pyruvate: step 1/1.</text>
</comment>
<comment type="subunit">
    <text evidence="1 4">Homotetramer (PubMed:1678537). Interacts with PTEN upstream reading frame protein MP31 (By similarity).</text>
</comment>
<comment type="subcellular location">
    <subcellularLocation>
        <location>Cytoplasm</location>
    </subcellularLocation>
</comment>
<comment type="PTM">
    <text evidence="1">ISGylated.</text>
</comment>
<comment type="similarity">
    <text evidence="6">Belongs to the LDH/MDH superfamily. LDH family.</text>
</comment>
<dbReference type="EC" id="1.1.1.27" evidence="1"/>
<dbReference type="EMBL" id="U07178">
    <property type="protein sequence ID" value="AAA50436.1"/>
    <property type="molecule type" value="mRNA"/>
</dbReference>
<dbReference type="PIR" id="A00348">
    <property type="entry name" value="DEPGLM"/>
</dbReference>
<dbReference type="RefSeq" id="XP_020937314.1">
    <property type="nucleotide sequence ID" value="XM_021081655.1"/>
</dbReference>
<dbReference type="RefSeq" id="XP_020937318.1">
    <property type="nucleotide sequence ID" value="XM_021081659.1"/>
</dbReference>
<dbReference type="PDB" id="9LDB">
    <property type="method" value="X-ray"/>
    <property type="resolution" value="2.20 A"/>
    <property type="chains" value="A/B=2-332"/>
</dbReference>
<dbReference type="PDB" id="9LDT">
    <property type="method" value="X-ray"/>
    <property type="resolution" value="2.00 A"/>
    <property type="chains" value="A/B=2-332"/>
</dbReference>
<dbReference type="PDBsum" id="9LDB"/>
<dbReference type="PDBsum" id="9LDT"/>
<dbReference type="SMR" id="P00339"/>
<dbReference type="CORUM" id="P00339"/>
<dbReference type="FunCoup" id="P00339">
    <property type="interactions" value="442"/>
</dbReference>
<dbReference type="STRING" id="9823.ENSSSCP00000036508"/>
<dbReference type="iPTMnet" id="P00339"/>
<dbReference type="PaxDb" id="9823-ENSSSCP00000014202"/>
<dbReference type="PeptideAtlas" id="P00339"/>
<dbReference type="Ensembl" id="ENSSSCT00000062740.3">
    <property type="protein sequence ID" value="ENSSSCP00000050647.2"/>
    <property type="gene ID" value="ENSSSCG00000013366.5"/>
</dbReference>
<dbReference type="Ensembl" id="ENSSSCT00070013974.1">
    <property type="protein sequence ID" value="ENSSSCP00070011516.1"/>
    <property type="gene ID" value="ENSSSCG00070007248.1"/>
</dbReference>
<dbReference type="Ensembl" id="ENSSSCT00085038097">
    <property type="protein sequence ID" value="ENSSSCP00085026440"/>
    <property type="gene ID" value="ENSSSCG00085019986"/>
</dbReference>
<dbReference type="Ensembl" id="ENSSSCT00090048337">
    <property type="protein sequence ID" value="ENSSSCP00090030047"/>
    <property type="gene ID" value="ENSSSCG00090027303"/>
</dbReference>
<dbReference type="Ensembl" id="ENSSSCT00105029882">
    <property type="protein sequence ID" value="ENSSSCP00105020792"/>
    <property type="gene ID" value="ENSSSCG00105015538"/>
</dbReference>
<dbReference type="Ensembl" id="ENSSSCT00110048623">
    <property type="protein sequence ID" value="ENSSSCP00110034238"/>
    <property type="gene ID" value="ENSSSCG00110025131"/>
</dbReference>
<dbReference type="Ensembl" id="ENSSSCT00115005050">
    <property type="protein sequence ID" value="ENSSSCP00115004687"/>
    <property type="gene ID" value="ENSSSCG00115003020"/>
</dbReference>
<dbReference type="Ensembl" id="ENSSSCT00130053067">
    <property type="protein sequence ID" value="ENSSSCP00130037745"/>
    <property type="gene ID" value="ENSSSCG00130027281"/>
</dbReference>
<dbReference type="GeneID" id="407245"/>
<dbReference type="VGNC" id="VGNC:99784">
    <property type="gene designation" value="LDHA"/>
</dbReference>
<dbReference type="eggNOG" id="KOG1495">
    <property type="taxonomic scope" value="Eukaryota"/>
</dbReference>
<dbReference type="GeneTree" id="ENSGT00940000153201"/>
<dbReference type="HOGENOM" id="CLU_045401_0_2_1"/>
<dbReference type="InParanoid" id="P00339"/>
<dbReference type="OMA" id="EWDLDDY"/>
<dbReference type="TreeFam" id="TF314963"/>
<dbReference type="BRENDA" id="1.1.1.27">
    <property type="organism ID" value="6170"/>
</dbReference>
<dbReference type="Reactome" id="R-SSC-70268">
    <property type="pathway name" value="Pyruvate metabolism"/>
</dbReference>
<dbReference type="Reactome" id="R-SSC-9861718">
    <property type="pathway name" value="Regulation of pyruvate metabolism"/>
</dbReference>
<dbReference type="UniPathway" id="UPA00554">
    <property type="reaction ID" value="UER00611"/>
</dbReference>
<dbReference type="EvolutionaryTrace" id="P00339"/>
<dbReference type="Proteomes" id="UP000008227">
    <property type="component" value="Chromosome 2"/>
</dbReference>
<dbReference type="Proteomes" id="UP000314985">
    <property type="component" value="Chromosome 2"/>
</dbReference>
<dbReference type="Proteomes" id="UP000694570">
    <property type="component" value="Unplaced"/>
</dbReference>
<dbReference type="Proteomes" id="UP000694571">
    <property type="component" value="Unplaced"/>
</dbReference>
<dbReference type="Proteomes" id="UP000694720">
    <property type="component" value="Unplaced"/>
</dbReference>
<dbReference type="Proteomes" id="UP000694722">
    <property type="component" value="Unplaced"/>
</dbReference>
<dbReference type="Proteomes" id="UP000694723">
    <property type="component" value="Unplaced"/>
</dbReference>
<dbReference type="Proteomes" id="UP000694724">
    <property type="component" value="Unplaced"/>
</dbReference>
<dbReference type="Proteomes" id="UP000694725">
    <property type="component" value="Unplaced"/>
</dbReference>
<dbReference type="Proteomes" id="UP000694726">
    <property type="component" value="Unplaced"/>
</dbReference>
<dbReference type="Proteomes" id="UP000694727">
    <property type="component" value="Unplaced"/>
</dbReference>
<dbReference type="Proteomes" id="UP000694728">
    <property type="component" value="Unplaced"/>
</dbReference>
<dbReference type="GO" id="GO:0005829">
    <property type="term" value="C:cytosol"/>
    <property type="evidence" value="ECO:0007669"/>
    <property type="project" value="Ensembl"/>
</dbReference>
<dbReference type="GO" id="GO:1990204">
    <property type="term" value="C:oxidoreductase complex"/>
    <property type="evidence" value="ECO:0007669"/>
    <property type="project" value="Ensembl"/>
</dbReference>
<dbReference type="GO" id="GO:0035686">
    <property type="term" value="C:sperm fibrous sheath"/>
    <property type="evidence" value="ECO:0007669"/>
    <property type="project" value="Ensembl"/>
</dbReference>
<dbReference type="GO" id="GO:0042802">
    <property type="term" value="F:identical protein binding"/>
    <property type="evidence" value="ECO:0007669"/>
    <property type="project" value="Ensembl"/>
</dbReference>
<dbReference type="GO" id="GO:0004459">
    <property type="term" value="F:L-lactate dehydrogenase activity"/>
    <property type="evidence" value="ECO:0007669"/>
    <property type="project" value="UniProtKB-EC"/>
</dbReference>
<dbReference type="GO" id="GO:0019661">
    <property type="term" value="P:glucose catabolic process to lactate via pyruvate"/>
    <property type="evidence" value="ECO:0007669"/>
    <property type="project" value="Ensembl"/>
</dbReference>
<dbReference type="GO" id="GO:0042867">
    <property type="term" value="P:pyruvate catabolic process"/>
    <property type="evidence" value="ECO:0007669"/>
    <property type="project" value="Ensembl"/>
</dbReference>
<dbReference type="CDD" id="cd05293">
    <property type="entry name" value="LDH_1"/>
    <property type="match status" value="1"/>
</dbReference>
<dbReference type="FunFam" id="3.40.50.720:FF:000029">
    <property type="entry name" value="L-lactate dehydrogenase A chain"/>
    <property type="match status" value="1"/>
</dbReference>
<dbReference type="FunFam" id="3.90.110.10:FF:000003">
    <property type="entry name" value="L-lactate dehydrogenase A chain"/>
    <property type="match status" value="1"/>
</dbReference>
<dbReference type="Gene3D" id="3.90.110.10">
    <property type="entry name" value="Lactate dehydrogenase/glycoside hydrolase, family 4, C-terminal"/>
    <property type="match status" value="1"/>
</dbReference>
<dbReference type="Gene3D" id="3.40.50.720">
    <property type="entry name" value="NAD(P)-binding Rossmann-like Domain"/>
    <property type="match status" value="1"/>
</dbReference>
<dbReference type="HAMAP" id="MF_00488">
    <property type="entry name" value="Lactate_dehydrog"/>
    <property type="match status" value="1"/>
</dbReference>
<dbReference type="InterPro" id="IPR001557">
    <property type="entry name" value="L-lactate/malate_DH"/>
</dbReference>
<dbReference type="InterPro" id="IPR011304">
    <property type="entry name" value="L-lactate_DH"/>
</dbReference>
<dbReference type="InterPro" id="IPR018177">
    <property type="entry name" value="L-lactate_DH_AS"/>
</dbReference>
<dbReference type="InterPro" id="IPR022383">
    <property type="entry name" value="Lactate/malate_DH_C"/>
</dbReference>
<dbReference type="InterPro" id="IPR001236">
    <property type="entry name" value="Lactate/malate_DH_N"/>
</dbReference>
<dbReference type="InterPro" id="IPR015955">
    <property type="entry name" value="Lactate_DH/Glyco_Ohase_4_C"/>
</dbReference>
<dbReference type="InterPro" id="IPR036291">
    <property type="entry name" value="NAD(P)-bd_dom_sf"/>
</dbReference>
<dbReference type="NCBIfam" id="TIGR01771">
    <property type="entry name" value="L-LDH-NAD"/>
    <property type="match status" value="1"/>
</dbReference>
<dbReference type="NCBIfam" id="NF000824">
    <property type="entry name" value="PRK00066.1"/>
    <property type="match status" value="1"/>
</dbReference>
<dbReference type="NCBIfam" id="NF004863">
    <property type="entry name" value="PRK06223.1"/>
    <property type="match status" value="1"/>
</dbReference>
<dbReference type="PANTHER" id="PTHR43128">
    <property type="entry name" value="L-2-HYDROXYCARBOXYLATE DEHYDROGENASE (NAD(P)(+))"/>
    <property type="match status" value="1"/>
</dbReference>
<dbReference type="PANTHER" id="PTHR43128:SF10">
    <property type="entry name" value="L-LACTATE DEHYDROGENASE A CHAIN"/>
    <property type="match status" value="1"/>
</dbReference>
<dbReference type="Pfam" id="PF02866">
    <property type="entry name" value="Ldh_1_C"/>
    <property type="match status" value="1"/>
</dbReference>
<dbReference type="Pfam" id="PF00056">
    <property type="entry name" value="Ldh_1_N"/>
    <property type="match status" value="1"/>
</dbReference>
<dbReference type="PIRSF" id="PIRSF000102">
    <property type="entry name" value="Lac_mal_DH"/>
    <property type="match status" value="1"/>
</dbReference>
<dbReference type="PRINTS" id="PR00086">
    <property type="entry name" value="LLDHDRGNASE"/>
</dbReference>
<dbReference type="SUPFAM" id="SSF56327">
    <property type="entry name" value="LDH C-terminal domain-like"/>
    <property type="match status" value="1"/>
</dbReference>
<dbReference type="SUPFAM" id="SSF51735">
    <property type="entry name" value="NAD(P)-binding Rossmann-fold domains"/>
    <property type="match status" value="1"/>
</dbReference>
<dbReference type="PROSITE" id="PS00064">
    <property type="entry name" value="L_LDH"/>
    <property type="match status" value="1"/>
</dbReference>
<proteinExistence type="evidence at protein level"/>